<protein>
    <recommendedName>
        <fullName>cAMP-activated global transcriptional regulator CRP</fullName>
    </recommendedName>
    <alternativeName>
        <fullName>Catabolite activator protein</fullName>
        <shortName>CAP</shortName>
    </alternativeName>
    <alternativeName>
        <fullName>Catabolite gene activator</fullName>
    </alternativeName>
    <alternativeName>
        <fullName>cAMP receptor protein</fullName>
        <shortName>CRP</shortName>
    </alternativeName>
    <alternativeName>
        <fullName>cAMP regulatory protein</fullName>
    </alternativeName>
</protein>
<comment type="function">
    <text evidence="1 3">A global transcription regulator. Complexes with cyclic AMP (cAMP) which allosterically activates DNA binding to regulate transcription. Induces a severe bend in DNA. Acts as a negative regulator of its own synthesis as well as for adenylate cyclase (cyaA), which generates cAMP. Plays a major role in carbon catabolite repression (CCR) (By similarity).</text>
</comment>
<comment type="subunit">
    <text evidence="1">Homodimer, which upon binding cAMP is able to bind DNA. Binds the N- and C-terminus of RNA polymerase subunit RpoA and sigma-70 (RpoD) (By similarity).</text>
</comment>
<comment type="domain">
    <text evidence="1">The N-terminal domain binds cAMP and is responsible for homodimerization, while the C-terminal domain binds DNA when cAMP is bound.</text>
</comment>
<dbReference type="EMBL" id="M68973">
    <property type="protein sequence ID" value="AAA25058.1"/>
    <property type="molecule type" value="Genomic_DNA"/>
</dbReference>
<dbReference type="RefSeq" id="WP_000242758.1">
    <property type="nucleotide sequence ID" value="NZ_WPHE01000013.1"/>
</dbReference>
<dbReference type="BMRB" id="P0A2T7"/>
<dbReference type="SMR" id="P0A2T7"/>
<dbReference type="STRING" id="548.EAG7_04488"/>
<dbReference type="GeneID" id="98390475"/>
<dbReference type="OMA" id="KTMVVYG"/>
<dbReference type="GO" id="GO:0005829">
    <property type="term" value="C:cytosol"/>
    <property type="evidence" value="ECO:0007669"/>
    <property type="project" value="TreeGrafter"/>
</dbReference>
<dbReference type="GO" id="GO:0030552">
    <property type="term" value="F:cAMP binding"/>
    <property type="evidence" value="ECO:0007669"/>
    <property type="project" value="UniProtKB-KW"/>
</dbReference>
<dbReference type="GO" id="GO:0003677">
    <property type="term" value="F:DNA binding"/>
    <property type="evidence" value="ECO:0007669"/>
    <property type="project" value="UniProtKB-KW"/>
</dbReference>
<dbReference type="GO" id="GO:0003700">
    <property type="term" value="F:DNA-binding transcription factor activity"/>
    <property type="evidence" value="ECO:0007669"/>
    <property type="project" value="InterPro"/>
</dbReference>
<dbReference type="CDD" id="cd00038">
    <property type="entry name" value="CAP_ED"/>
    <property type="match status" value="1"/>
</dbReference>
<dbReference type="CDD" id="cd00092">
    <property type="entry name" value="HTH_CRP"/>
    <property type="match status" value="1"/>
</dbReference>
<dbReference type="FunFam" id="1.10.10.10:FF:000006">
    <property type="entry name" value="cAMP-activated global transcriptional regulator CRP"/>
    <property type="match status" value="1"/>
</dbReference>
<dbReference type="FunFam" id="2.60.120.10:FF:000001">
    <property type="entry name" value="cAMP-activated global transcriptional regulator CRP"/>
    <property type="match status" value="1"/>
</dbReference>
<dbReference type="Gene3D" id="2.60.120.10">
    <property type="entry name" value="Jelly Rolls"/>
    <property type="match status" value="1"/>
</dbReference>
<dbReference type="Gene3D" id="1.10.10.10">
    <property type="entry name" value="Winged helix-like DNA-binding domain superfamily/Winged helix DNA-binding domain"/>
    <property type="match status" value="1"/>
</dbReference>
<dbReference type="InterPro" id="IPR018488">
    <property type="entry name" value="cNMP-bd_CS"/>
</dbReference>
<dbReference type="InterPro" id="IPR000595">
    <property type="entry name" value="cNMP-bd_dom"/>
</dbReference>
<dbReference type="InterPro" id="IPR018490">
    <property type="entry name" value="cNMP-bd_dom_sf"/>
</dbReference>
<dbReference type="InterPro" id="IPR050397">
    <property type="entry name" value="Env_Response_Regulators"/>
</dbReference>
<dbReference type="InterPro" id="IPR012318">
    <property type="entry name" value="HTH_CRP"/>
</dbReference>
<dbReference type="InterPro" id="IPR014710">
    <property type="entry name" value="RmlC-like_jellyroll"/>
</dbReference>
<dbReference type="InterPro" id="IPR018335">
    <property type="entry name" value="Tscrpt_reg_HTH_Crp-type_CS"/>
</dbReference>
<dbReference type="InterPro" id="IPR036388">
    <property type="entry name" value="WH-like_DNA-bd_sf"/>
</dbReference>
<dbReference type="InterPro" id="IPR036390">
    <property type="entry name" value="WH_DNA-bd_sf"/>
</dbReference>
<dbReference type="NCBIfam" id="NF008732">
    <property type="entry name" value="PRK11753.1"/>
    <property type="match status" value="1"/>
</dbReference>
<dbReference type="PANTHER" id="PTHR24567">
    <property type="entry name" value="CRP FAMILY TRANSCRIPTIONAL REGULATORY PROTEIN"/>
    <property type="match status" value="1"/>
</dbReference>
<dbReference type="PANTHER" id="PTHR24567:SF68">
    <property type="entry name" value="DNA-BINDING TRANSCRIPTIONAL DUAL REGULATOR CRP"/>
    <property type="match status" value="1"/>
</dbReference>
<dbReference type="Pfam" id="PF00027">
    <property type="entry name" value="cNMP_binding"/>
    <property type="match status" value="1"/>
</dbReference>
<dbReference type="Pfam" id="PF13545">
    <property type="entry name" value="HTH_Crp_2"/>
    <property type="match status" value="1"/>
</dbReference>
<dbReference type="PRINTS" id="PR00034">
    <property type="entry name" value="HTHCRP"/>
</dbReference>
<dbReference type="SMART" id="SM00100">
    <property type="entry name" value="cNMP"/>
    <property type="match status" value="1"/>
</dbReference>
<dbReference type="SMART" id="SM00419">
    <property type="entry name" value="HTH_CRP"/>
    <property type="match status" value="1"/>
</dbReference>
<dbReference type="SUPFAM" id="SSF51206">
    <property type="entry name" value="cAMP-binding domain-like"/>
    <property type="match status" value="1"/>
</dbReference>
<dbReference type="SUPFAM" id="SSF46785">
    <property type="entry name" value="Winged helix' DNA-binding domain"/>
    <property type="match status" value="1"/>
</dbReference>
<dbReference type="PROSITE" id="PS00888">
    <property type="entry name" value="CNMP_BINDING_1"/>
    <property type="match status" value="1"/>
</dbReference>
<dbReference type="PROSITE" id="PS00889">
    <property type="entry name" value="CNMP_BINDING_2"/>
    <property type="match status" value="1"/>
</dbReference>
<dbReference type="PROSITE" id="PS50042">
    <property type="entry name" value="CNMP_BINDING_3"/>
    <property type="match status" value="1"/>
</dbReference>
<dbReference type="PROSITE" id="PS00042">
    <property type="entry name" value="HTH_CRP_1"/>
    <property type="match status" value="1"/>
</dbReference>
<dbReference type="PROSITE" id="PS51063">
    <property type="entry name" value="HTH_CRP_2"/>
    <property type="match status" value="1"/>
</dbReference>
<feature type="chain" id="PRO_0000100148" description="cAMP-activated global transcriptional regulator CRP">
    <location>
        <begin position="1"/>
        <end position="210"/>
    </location>
</feature>
<feature type="domain" description="HTH crp-type" evidence="2">
    <location>
        <begin position="138"/>
        <end position="210"/>
    </location>
</feature>
<feature type="DNA-binding region" description="H-T-H motif" evidence="2">
    <location>
        <begin position="180"/>
        <end position="186"/>
    </location>
</feature>
<feature type="region of interest" description="Activating region 2 (AR2); probably contacts the N-terminus of RpoA" evidence="1">
    <location>
        <begin position="20"/>
        <end position="22"/>
    </location>
</feature>
<feature type="region of interest" description="Activating region 3 (AR3); probably contacts sigma-70 (RpoD)" evidence="1">
    <location>
        <begin position="53"/>
        <end position="59"/>
    </location>
</feature>
<feature type="region of interest" description="Activating region 1 (AR1); probably contacts the C-terminus of RpoA" evidence="1">
    <location>
        <begin position="154"/>
        <end position="163"/>
    </location>
</feature>
<feature type="binding site" evidence="1">
    <location>
        <begin position="57"/>
        <end position="63"/>
    </location>
    <ligand>
        <name>3',5'-cyclic AMP</name>
        <dbReference type="ChEBI" id="CHEBI:58165"/>
        <label>1</label>
    </ligand>
</feature>
<feature type="binding site" evidence="1">
    <location>
        <begin position="72"/>
        <end position="74"/>
    </location>
    <ligand>
        <name>3',5'-cyclic AMP</name>
        <dbReference type="ChEBI" id="CHEBI:58165"/>
        <label>1</label>
    </ligand>
</feature>
<feature type="binding site" evidence="1">
    <location>
        <begin position="83"/>
        <end position="84"/>
    </location>
    <ligand>
        <name>3',5'-cyclic AMP</name>
        <dbReference type="ChEBI" id="CHEBI:58165"/>
        <label>1</label>
    </ligand>
</feature>
<feature type="binding site" evidence="1">
    <location>
        <begin position="128"/>
        <end position="129"/>
    </location>
    <ligand>
        <name>3',5'-cyclic AMP</name>
        <dbReference type="ChEBI" id="CHEBI:58165"/>
        <label>1</label>
    </ligand>
</feature>
<feature type="binding site" evidence="1">
    <location>
        <begin position="136"/>
        <end position="137"/>
    </location>
    <ligand>
        <name>3',5'-cyclic AMP</name>
        <dbReference type="ChEBI" id="CHEBI:58165"/>
        <label>2</label>
    </ligand>
</feature>
<feature type="binding site" evidence="1">
    <location>
        <begin position="171"/>
        <end position="181"/>
    </location>
    <ligand>
        <name>3',5'-cyclic AMP</name>
        <dbReference type="ChEBI" id="CHEBI:58165"/>
        <label>2</label>
    </ligand>
</feature>
<feature type="site" description="Activating region 2 (AR2); probably contacts the N-terminus of RpoA" evidence="1">
    <location>
        <position position="97"/>
    </location>
</feature>
<feature type="site" description="Activating region 2 (AR2); probably contacts the N-terminus of RpoA" evidence="1">
    <location>
        <position position="102"/>
    </location>
</feature>
<feature type="modified residue" description="N6-acetyllysine" evidence="1">
    <location>
        <position position="101"/>
    </location>
</feature>
<accession>P0A2T7</accession>
<accession>P06170</accession>
<accession>P29282</accession>
<keyword id="KW-0007">Acetylation</keyword>
<keyword id="KW-0010">Activator</keyword>
<keyword id="KW-0114">cAMP</keyword>
<keyword id="KW-0116">cAMP-binding</keyword>
<keyword id="KW-0238">DNA-binding</keyword>
<keyword id="KW-0547">Nucleotide-binding</keyword>
<keyword id="KW-0804">Transcription</keyword>
<keyword id="KW-0805">Transcription regulation</keyword>
<reference key="1">
    <citation type="journal article" date="1991" name="J. Bacteriol.">
        <title>Klebsiella aerogenes catabolite gene activator protein and the gene encoding it (crp).</title>
        <authorList>
            <person name="Osuna R."/>
            <person name="Bender R.A."/>
        </authorList>
    </citation>
    <scope>NUCLEOTIDE SEQUENCE [GENOMIC DNA]</scope>
    <scope>FUNCTION IN TRANSCRIPTION</scope>
    <scope>DNA-BINDING</scope>
    <source>
        <strain>KC1043</strain>
    </source>
</reference>
<gene>
    <name type="primary">crp</name>
    <name type="synonym">cap</name>
</gene>
<evidence type="ECO:0000250" key="1"/>
<evidence type="ECO:0000255" key="2">
    <source>
        <dbReference type="PROSITE-ProRule" id="PRU00387"/>
    </source>
</evidence>
<evidence type="ECO:0000269" key="3">
    <source>
    </source>
</evidence>
<proteinExistence type="evidence at protein level"/>
<organism>
    <name type="scientific">Klebsiella aerogenes</name>
    <name type="common">Enterobacter aerogenes</name>
    <dbReference type="NCBI Taxonomy" id="548"/>
    <lineage>
        <taxon>Bacteria</taxon>
        <taxon>Pseudomonadati</taxon>
        <taxon>Pseudomonadota</taxon>
        <taxon>Gammaproteobacteria</taxon>
        <taxon>Enterobacterales</taxon>
        <taxon>Enterobacteriaceae</taxon>
        <taxon>Klebsiella/Raoultella group</taxon>
        <taxon>Klebsiella</taxon>
    </lineage>
</organism>
<sequence>MVLGKPQTDPTLEWFLSHCHIHKYPSKSTLIHQGEKAETLYYIVKGSVAVLIKDEEGKEMILSYLNQGDFIGELGLFEEGQERSAWVRAKTACEVAEISYKKFRQLIQVNPDILMRLSSQMARRLQVTSEKVGNLAFLDVTGRIAQTLLNLAKQPDAMTHPDGMQIKITRQEIGQIVGCSRETVGRILKMLEDQNLISAHGKTIVVYGTR</sequence>
<name>CRP_KLEAE</name>